<sequence length="397" mass="41533">MDALLALHRRSRRTVVGLMSGTSLDGVDAALVQLDGSGPDLTMNPEAFVHIPYPTALRDLIRTNTDPASSSVQDVTRLDARLAETYAAAVDRVAAEADVDRGTVDLVGAHGQTVCHLPEPADCAGKDVRATLQLGNPSTLATRLGVPVVGNFRAADLALGGQGAPLVPYFDRVAFTAPDEARGLLNLGGIANLTVLPAGAAPDDVRAFDTGPANMVIDALAARLFDAPHDPDGRHANAGTPDHDLLADLLEGEYFRREPPKSTGRNDFGPDYVDRLLGAAQSRTLSPEDTMATATLLTAASVYQAYAQYVRPEQAIDELIVSGGGVHNDTLLRMLEEAFTPIPVRPTSDYGVAPDAKEALCFAVLAHEAVNGTPTNLPSVTGASARTPLGSLSVPGP</sequence>
<accession>Q2RZV7</accession>
<keyword id="KW-0067">ATP-binding</keyword>
<keyword id="KW-0119">Carbohydrate metabolism</keyword>
<keyword id="KW-0418">Kinase</keyword>
<keyword id="KW-0547">Nucleotide-binding</keyword>
<keyword id="KW-1185">Reference proteome</keyword>
<keyword id="KW-0808">Transferase</keyword>
<gene>
    <name evidence="1" type="primary">anmK</name>
    <name type="ordered locus">SRU_2425</name>
</gene>
<dbReference type="EC" id="2.7.1.170" evidence="1"/>
<dbReference type="EMBL" id="CP000159">
    <property type="protein sequence ID" value="ABC45047.1"/>
    <property type="molecule type" value="Genomic_DNA"/>
</dbReference>
<dbReference type="RefSeq" id="WP_011405142.1">
    <property type="nucleotide sequence ID" value="NC_007677.1"/>
</dbReference>
<dbReference type="RefSeq" id="YP_446524.1">
    <property type="nucleotide sequence ID" value="NC_007677.1"/>
</dbReference>
<dbReference type="SMR" id="Q2RZV7"/>
<dbReference type="STRING" id="309807.SRU_2425"/>
<dbReference type="EnsemblBacteria" id="ABC45047">
    <property type="protein sequence ID" value="ABC45047"/>
    <property type="gene ID" value="SRU_2425"/>
</dbReference>
<dbReference type="KEGG" id="sru:SRU_2425"/>
<dbReference type="PATRIC" id="fig|309807.25.peg.2527"/>
<dbReference type="eggNOG" id="COG2377">
    <property type="taxonomic scope" value="Bacteria"/>
</dbReference>
<dbReference type="HOGENOM" id="CLU_038782_1_0_10"/>
<dbReference type="OrthoDB" id="9763949at2"/>
<dbReference type="UniPathway" id="UPA00343"/>
<dbReference type="UniPathway" id="UPA00544"/>
<dbReference type="Proteomes" id="UP000008674">
    <property type="component" value="Chromosome"/>
</dbReference>
<dbReference type="GO" id="GO:0005524">
    <property type="term" value="F:ATP binding"/>
    <property type="evidence" value="ECO:0007669"/>
    <property type="project" value="UniProtKB-UniRule"/>
</dbReference>
<dbReference type="GO" id="GO:0016301">
    <property type="term" value="F:kinase activity"/>
    <property type="evidence" value="ECO:0007669"/>
    <property type="project" value="UniProtKB-KW"/>
</dbReference>
<dbReference type="GO" id="GO:0016773">
    <property type="term" value="F:phosphotransferase activity, alcohol group as acceptor"/>
    <property type="evidence" value="ECO:0007669"/>
    <property type="project" value="UniProtKB-UniRule"/>
</dbReference>
<dbReference type="GO" id="GO:0097175">
    <property type="term" value="P:1,6-anhydro-N-acetyl-beta-muramic acid catabolic process"/>
    <property type="evidence" value="ECO:0007669"/>
    <property type="project" value="UniProtKB-UniRule"/>
</dbReference>
<dbReference type="GO" id="GO:0006040">
    <property type="term" value="P:amino sugar metabolic process"/>
    <property type="evidence" value="ECO:0007669"/>
    <property type="project" value="InterPro"/>
</dbReference>
<dbReference type="GO" id="GO:0009254">
    <property type="term" value="P:peptidoglycan turnover"/>
    <property type="evidence" value="ECO:0007669"/>
    <property type="project" value="UniProtKB-UniRule"/>
</dbReference>
<dbReference type="CDD" id="cd24050">
    <property type="entry name" value="ASKHA_NBD_ANMK"/>
    <property type="match status" value="1"/>
</dbReference>
<dbReference type="Gene3D" id="3.30.420.40">
    <property type="match status" value="2"/>
</dbReference>
<dbReference type="HAMAP" id="MF_01270">
    <property type="entry name" value="AnhMurNAc_kinase"/>
    <property type="match status" value="1"/>
</dbReference>
<dbReference type="InterPro" id="IPR005338">
    <property type="entry name" value="Anhydro_N_Ac-Mur_kinase"/>
</dbReference>
<dbReference type="InterPro" id="IPR043129">
    <property type="entry name" value="ATPase_NBD"/>
</dbReference>
<dbReference type="NCBIfam" id="NF007148">
    <property type="entry name" value="PRK09585.3-2"/>
    <property type="match status" value="1"/>
</dbReference>
<dbReference type="PANTHER" id="PTHR30605">
    <property type="entry name" value="ANHYDRO-N-ACETYLMURAMIC ACID KINASE"/>
    <property type="match status" value="1"/>
</dbReference>
<dbReference type="PANTHER" id="PTHR30605:SF0">
    <property type="entry name" value="ANHYDRO-N-ACETYLMURAMIC ACID KINASE"/>
    <property type="match status" value="1"/>
</dbReference>
<dbReference type="Pfam" id="PF03702">
    <property type="entry name" value="AnmK"/>
    <property type="match status" value="1"/>
</dbReference>
<dbReference type="SUPFAM" id="SSF53067">
    <property type="entry name" value="Actin-like ATPase domain"/>
    <property type="match status" value="1"/>
</dbReference>
<feature type="chain" id="PRO_0000250052" description="Anhydro-N-acetylmuramic acid kinase">
    <location>
        <begin position="1"/>
        <end position="397"/>
    </location>
</feature>
<feature type="region of interest" description="Disordered" evidence="2">
    <location>
        <begin position="373"/>
        <end position="397"/>
    </location>
</feature>
<feature type="compositionally biased region" description="Polar residues" evidence="2">
    <location>
        <begin position="373"/>
        <end position="384"/>
    </location>
</feature>
<feature type="binding site" evidence="1">
    <location>
        <begin position="21"/>
        <end position="28"/>
    </location>
    <ligand>
        <name>ATP</name>
        <dbReference type="ChEBI" id="CHEBI:30616"/>
    </ligand>
</feature>
<protein>
    <recommendedName>
        <fullName evidence="1">Anhydro-N-acetylmuramic acid kinase</fullName>
        <ecNumber evidence="1">2.7.1.170</ecNumber>
    </recommendedName>
    <alternativeName>
        <fullName evidence="1">AnhMurNAc kinase</fullName>
    </alternativeName>
</protein>
<evidence type="ECO:0000255" key="1">
    <source>
        <dbReference type="HAMAP-Rule" id="MF_01270"/>
    </source>
</evidence>
<evidence type="ECO:0000256" key="2">
    <source>
        <dbReference type="SAM" id="MobiDB-lite"/>
    </source>
</evidence>
<comment type="function">
    <text evidence="1">Catalyzes the specific phosphorylation of 1,6-anhydro-N-acetylmuramic acid (anhMurNAc) with the simultaneous cleavage of the 1,6-anhydro ring, generating MurNAc-6-P. Is required for the utilization of anhMurNAc either imported from the medium or derived from its own cell wall murein, and thus plays a role in cell wall recycling.</text>
</comment>
<comment type="catalytic activity">
    <reaction evidence="1">
        <text>1,6-anhydro-N-acetyl-beta-muramate + ATP + H2O = N-acetyl-D-muramate 6-phosphate + ADP + H(+)</text>
        <dbReference type="Rhea" id="RHEA:24952"/>
        <dbReference type="ChEBI" id="CHEBI:15377"/>
        <dbReference type="ChEBI" id="CHEBI:15378"/>
        <dbReference type="ChEBI" id="CHEBI:30616"/>
        <dbReference type="ChEBI" id="CHEBI:58690"/>
        <dbReference type="ChEBI" id="CHEBI:58722"/>
        <dbReference type="ChEBI" id="CHEBI:456216"/>
        <dbReference type="EC" id="2.7.1.170"/>
    </reaction>
</comment>
<comment type="pathway">
    <text evidence="1">Amino-sugar metabolism; 1,6-anhydro-N-acetylmuramate degradation.</text>
</comment>
<comment type="pathway">
    <text evidence="1">Cell wall biogenesis; peptidoglycan recycling.</text>
</comment>
<comment type="similarity">
    <text evidence="1">Belongs to the anhydro-N-acetylmuramic acid kinase family.</text>
</comment>
<organism>
    <name type="scientific">Salinibacter ruber (strain DSM 13855 / M31)</name>
    <dbReference type="NCBI Taxonomy" id="309807"/>
    <lineage>
        <taxon>Bacteria</taxon>
        <taxon>Pseudomonadati</taxon>
        <taxon>Rhodothermota</taxon>
        <taxon>Rhodothermia</taxon>
        <taxon>Rhodothermales</taxon>
        <taxon>Salinibacteraceae</taxon>
        <taxon>Salinibacter</taxon>
    </lineage>
</organism>
<name>ANMK_SALRD</name>
<proteinExistence type="inferred from homology"/>
<reference key="1">
    <citation type="journal article" date="2005" name="Proc. Natl. Acad. Sci. U.S.A.">
        <title>The genome of Salinibacter ruber: convergence and gene exchange among hyperhalophilic bacteria and archaea.</title>
        <authorList>
            <person name="Mongodin E.F."/>
            <person name="Nelson K.E."/>
            <person name="Daugherty S."/>
            <person name="DeBoy R.T."/>
            <person name="Wister J."/>
            <person name="Khouri H."/>
            <person name="Weidman J."/>
            <person name="Walsh D.A."/>
            <person name="Papke R.T."/>
            <person name="Sanchez Perez G."/>
            <person name="Sharma A.K."/>
            <person name="Nesbo C.L."/>
            <person name="MacLeod D."/>
            <person name="Bapteste E."/>
            <person name="Doolittle W.F."/>
            <person name="Charlebois R.L."/>
            <person name="Legault B."/>
            <person name="Rodriguez-Valera F."/>
        </authorList>
    </citation>
    <scope>NUCLEOTIDE SEQUENCE [LARGE SCALE GENOMIC DNA]</scope>
    <source>
        <strain>DSM 13855 / CECT 5946 / M31</strain>
    </source>
</reference>